<sequence>MSGSASFEGGVFSPYLTGRLPPWAGVRQNVMGSTVDGRPVQPANSSTLTYATLSSSPLDAAAAAAATAAANTILGMGYYGSIVANSSSSNNPSTLAEDKLLVLLAQLEALTQRLGELSKQVAQLREQTESAVATAKSK</sequence>
<comment type="function">
    <text evidence="1">Structural component of the virion that acts as a cement protein on the capsid exterior and forms triskelion structures consisting of three molecules that stabilize three hexon trimers at the center of each icosahedral facet and fixes the peripentonal hexons. Dispensable for assembly. During virus entry, recruits the anterograde motor kinesin-1 to the capsid docked at the nuclear pore complex thereby subjecting the docked capsid to a pulling force. The resulting tension leads to capsid disruption, dispersion of capsid fragments toward cell periphery and eventually viral DNA entry into the host nucleus.</text>
</comment>
<comment type="subunit">
    <text evidence="1">Homotrimer. Interacts with hexon protein; this interaction tethers the hexons together. Self-interacts with adjacent proteins. Interacts with kinesin light chain KLC1; this interaction leads to capsid disruption at the nuclear pore complex during virus entry into host cell.</text>
</comment>
<comment type="subcellular location">
    <subcellularLocation>
        <location evidence="1">Virion</location>
    </subcellularLocation>
    <subcellularLocation>
        <location evidence="1">Host nucleus</location>
    </subcellularLocation>
    <text evidence="1">Located in the canyons between the hexons on the outer surface of the capsid. Forms a sort of hairnet on the outer side of the virion. Present in 240 copies per virion.</text>
</comment>
<comment type="induction">
    <text evidence="1">Expressed in the intermediate phase of the viral replicative cycle.</text>
</comment>
<comment type="domain">
    <text evidence="1">Three N-terminal domains of hexon-interlacing protein form triskelions between hexon capsomers.</text>
</comment>
<comment type="miscellaneous">
    <text evidence="1">This protein is only encoded by mastadenoviruses, and may therefore play a role in mammals tropism.</text>
</comment>
<comment type="similarity">
    <text evidence="1">Belongs to the adenoviridae hexon-interlacing protein family.</text>
</comment>
<evidence type="ECO:0000255" key="1">
    <source>
        <dbReference type="HAMAP-Rule" id="MF_04050"/>
    </source>
</evidence>
<organismHost>
    <name type="scientific">Homo sapiens</name>
    <name type="common">Human</name>
    <dbReference type="NCBI Taxonomy" id="9606"/>
</organismHost>
<keyword id="KW-1232">Capsid decoration protein</keyword>
<keyword id="KW-0167">Capsid protein</keyword>
<keyword id="KW-0175">Coiled coil</keyword>
<keyword id="KW-1048">Host nucleus</keyword>
<keyword id="KW-0945">Host-virus interaction</keyword>
<keyword id="KW-0946">Virion</keyword>
<keyword id="KW-1160">Virus entry into host cell</keyword>
<dbReference type="EMBL" id="J01962">
    <property type="protein sequence ID" value="AAA42510.1"/>
    <property type="molecule type" value="Genomic_DNA"/>
</dbReference>
<dbReference type="PIR" id="B03854">
    <property type="entry name" value="SXAD93"/>
</dbReference>
<dbReference type="SMR" id="P68970"/>
<dbReference type="GO" id="GO:0042025">
    <property type="term" value="C:host cell nucleus"/>
    <property type="evidence" value="ECO:0007669"/>
    <property type="project" value="UniProtKB-SubCell"/>
</dbReference>
<dbReference type="GO" id="GO:0098021">
    <property type="term" value="C:viral capsid, decoration"/>
    <property type="evidence" value="ECO:0007669"/>
    <property type="project" value="UniProtKB-UniRule"/>
</dbReference>
<dbReference type="GO" id="GO:0031423">
    <property type="term" value="F:hexon binding"/>
    <property type="evidence" value="ECO:0007669"/>
    <property type="project" value="InterPro"/>
</dbReference>
<dbReference type="GO" id="GO:0046718">
    <property type="term" value="P:symbiont entry into host cell"/>
    <property type="evidence" value="ECO:0007669"/>
    <property type="project" value="UniProtKB-UniRule"/>
</dbReference>
<dbReference type="Gene3D" id="6.10.250.3040">
    <property type="match status" value="1"/>
</dbReference>
<dbReference type="HAMAP" id="MF_04050">
    <property type="entry name" value="ADV_CAP9"/>
    <property type="match status" value="1"/>
</dbReference>
<dbReference type="InterPro" id="IPR005641">
    <property type="entry name" value="Hexon_assoc_IX"/>
</dbReference>
<dbReference type="Pfam" id="PF03955">
    <property type="entry name" value="Adeno_PIX"/>
    <property type="match status" value="1"/>
</dbReference>
<organism>
    <name type="scientific">Human adenovirus B serotype 3</name>
    <name type="common">HAdV-3</name>
    <name type="synonym">Human adenovirus 3</name>
    <dbReference type="NCBI Taxonomy" id="45659"/>
    <lineage>
        <taxon>Viruses</taxon>
        <taxon>Varidnaviria</taxon>
        <taxon>Bamfordvirae</taxon>
        <taxon>Preplasmiviricota</taxon>
        <taxon>Tectiliviricetes</taxon>
        <taxon>Rowavirales</taxon>
        <taxon>Adenoviridae</taxon>
        <taxon>Mastadenovirus</taxon>
        <taxon>Human mastadenovirus B</taxon>
    </lineage>
</organism>
<reference key="1">
    <citation type="journal article" date="1981" name="Gene">
        <title>The nucleotide sequence of the polypeptide IX gene of human adenovirus type 3.</title>
        <authorList>
            <person name="Engler J.A."/>
        </authorList>
    </citation>
    <scope>NUCLEOTIDE SEQUENCE [GENOMIC DNA]</scope>
</reference>
<protein>
    <recommendedName>
        <fullName evidence="1">Hexon-interlacing protein</fullName>
    </recommendedName>
    <alternativeName>
        <fullName evidence="1">Protein IX</fullName>
    </alternativeName>
</protein>
<accession>P68970</accession>
<accession>P03283</accession>
<name>CAP9_ADE03</name>
<gene>
    <name evidence="1" type="primary">IX</name>
    <name type="synonym">PIX</name>
</gene>
<proteinExistence type="inferred from homology"/>
<feature type="chain" id="PRO_0000221845" description="Hexon-interlacing protein" evidence="1">
    <location>
        <begin position="1"/>
        <end position="138"/>
    </location>
</feature>
<feature type="coiled-coil region" evidence="1">
    <location>
        <begin position="100"/>
        <end position="127"/>
    </location>
</feature>